<evidence type="ECO:0000255" key="1">
    <source>
        <dbReference type="HAMAP-Rule" id="MF_00564"/>
    </source>
</evidence>
<evidence type="ECO:0000256" key="2">
    <source>
        <dbReference type="SAM" id="MobiDB-lite"/>
    </source>
</evidence>
<dbReference type="EC" id="2.7.7.56" evidence="1"/>
<dbReference type="EMBL" id="AP008957">
    <property type="protein sequence ID" value="BAH34587.1"/>
    <property type="molecule type" value="Genomic_DNA"/>
</dbReference>
<dbReference type="RefSeq" id="WP_003945332.1">
    <property type="nucleotide sequence ID" value="NC_012490.1"/>
</dbReference>
<dbReference type="SMR" id="C1A1V2"/>
<dbReference type="GeneID" id="93805406"/>
<dbReference type="KEGG" id="rer:RER_38790"/>
<dbReference type="eggNOG" id="COG0689">
    <property type="taxonomic scope" value="Bacteria"/>
</dbReference>
<dbReference type="HOGENOM" id="CLU_050858_0_0_11"/>
<dbReference type="Proteomes" id="UP000002204">
    <property type="component" value="Chromosome"/>
</dbReference>
<dbReference type="GO" id="GO:0000175">
    <property type="term" value="F:3'-5'-RNA exonuclease activity"/>
    <property type="evidence" value="ECO:0007669"/>
    <property type="project" value="UniProtKB-UniRule"/>
</dbReference>
<dbReference type="GO" id="GO:0000049">
    <property type="term" value="F:tRNA binding"/>
    <property type="evidence" value="ECO:0007669"/>
    <property type="project" value="UniProtKB-UniRule"/>
</dbReference>
<dbReference type="GO" id="GO:0009022">
    <property type="term" value="F:tRNA nucleotidyltransferase activity"/>
    <property type="evidence" value="ECO:0007669"/>
    <property type="project" value="UniProtKB-UniRule"/>
</dbReference>
<dbReference type="GO" id="GO:0016075">
    <property type="term" value="P:rRNA catabolic process"/>
    <property type="evidence" value="ECO:0007669"/>
    <property type="project" value="UniProtKB-UniRule"/>
</dbReference>
<dbReference type="GO" id="GO:0006364">
    <property type="term" value="P:rRNA processing"/>
    <property type="evidence" value="ECO:0007669"/>
    <property type="project" value="UniProtKB-KW"/>
</dbReference>
<dbReference type="GO" id="GO:0008033">
    <property type="term" value="P:tRNA processing"/>
    <property type="evidence" value="ECO:0007669"/>
    <property type="project" value="UniProtKB-UniRule"/>
</dbReference>
<dbReference type="CDD" id="cd11362">
    <property type="entry name" value="RNase_PH_bact"/>
    <property type="match status" value="1"/>
</dbReference>
<dbReference type="FunFam" id="3.30.230.70:FF:000003">
    <property type="entry name" value="Ribonuclease PH"/>
    <property type="match status" value="1"/>
</dbReference>
<dbReference type="Gene3D" id="3.30.230.70">
    <property type="entry name" value="GHMP Kinase, N-terminal domain"/>
    <property type="match status" value="1"/>
</dbReference>
<dbReference type="HAMAP" id="MF_00564">
    <property type="entry name" value="RNase_PH"/>
    <property type="match status" value="1"/>
</dbReference>
<dbReference type="InterPro" id="IPR001247">
    <property type="entry name" value="ExoRNase_PH_dom1"/>
</dbReference>
<dbReference type="InterPro" id="IPR015847">
    <property type="entry name" value="ExoRNase_PH_dom2"/>
</dbReference>
<dbReference type="InterPro" id="IPR036345">
    <property type="entry name" value="ExoRNase_PH_dom2_sf"/>
</dbReference>
<dbReference type="InterPro" id="IPR027408">
    <property type="entry name" value="PNPase/RNase_PH_dom_sf"/>
</dbReference>
<dbReference type="InterPro" id="IPR020568">
    <property type="entry name" value="Ribosomal_Su5_D2-typ_SF"/>
</dbReference>
<dbReference type="InterPro" id="IPR050080">
    <property type="entry name" value="RNase_PH"/>
</dbReference>
<dbReference type="InterPro" id="IPR002381">
    <property type="entry name" value="RNase_PH_bac-type"/>
</dbReference>
<dbReference type="InterPro" id="IPR018336">
    <property type="entry name" value="RNase_PH_CS"/>
</dbReference>
<dbReference type="NCBIfam" id="TIGR01966">
    <property type="entry name" value="RNasePH"/>
    <property type="match status" value="1"/>
</dbReference>
<dbReference type="PANTHER" id="PTHR11953">
    <property type="entry name" value="EXOSOME COMPLEX COMPONENT"/>
    <property type="match status" value="1"/>
</dbReference>
<dbReference type="PANTHER" id="PTHR11953:SF0">
    <property type="entry name" value="EXOSOME COMPLEX COMPONENT RRP41"/>
    <property type="match status" value="1"/>
</dbReference>
<dbReference type="Pfam" id="PF01138">
    <property type="entry name" value="RNase_PH"/>
    <property type="match status" value="1"/>
</dbReference>
<dbReference type="Pfam" id="PF03725">
    <property type="entry name" value="RNase_PH_C"/>
    <property type="match status" value="1"/>
</dbReference>
<dbReference type="SUPFAM" id="SSF55666">
    <property type="entry name" value="Ribonuclease PH domain 2-like"/>
    <property type="match status" value="1"/>
</dbReference>
<dbReference type="SUPFAM" id="SSF54211">
    <property type="entry name" value="Ribosomal protein S5 domain 2-like"/>
    <property type="match status" value="1"/>
</dbReference>
<dbReference type="PROSITE" id="PS01277">
    <property type="entry name" value="RIBONUCLEASE_PH"/>
    <property type="match status" value="1"/>
</dbReference>
<name>RNPH_RHOE4</name>
<accession>C1A1V2</accession>
<organism>
    <name type="scientific">Rhodococcus erythropolis (strain PR4 / NBRC 100887)</name>
    <dbReference type="NCBI Taxonomy" id="234621"/>
    <lineage>
        <taxon>Bacteria</taxon>
        <taxon>Bacillati</taxon>
        <taxon>Actinomycetota</taxon>
        <taxon>Actinomycetes</taxon>
        <taxon>Mycobacteriales</taxon>
        <taxon>Nocardiaceae</taxon>
        <taxon>Rhodococcus</taxon>
        <taxon>Rhodococcus erythropolis group</taxon>
    </lineage>
</organism>
<gene>
    <name evidence="1" type="primary">rph</name>
    <name type="ordered locus">RER_38790</name>
</gene>
<sequence>MTTREDGRADDELRTVKITRGFTSHPAGSVLVEFGNTRVMCTASVEEGVPRWRKGSGLGWLTAEYAMLPAATHTRSGRESVKGKVGGRTQEISRLIGRSLRACIDLAAIGENTIALDCDVLQADGGTRTAAVTGAYVALVDAVTYLRAADLLSDPQPISCGIAAVSVGVVDGRVRLDLPYEEDSRAEVDMNVVATDTGTLVEIQGTGEGATFPRSTLDKLLDSALAGCEQLFEIQRQALAEPYPGVLPEPKNPEPKKKFGA</sequence>
<keyword id="KW-0548">Nucleotidyltransferase</keyword>
<keyword id="KW-0694">RNA-binding</keyword>
<keyword id="KW-0698">rRNA processing</keyword>
<keyword id="KW-0808">Transferase</keyword>
<keyword id="KW-0819">tRNA processing</keyword>
<keyword id="KW-0820">tRNA-binding</keyword>
<proteinExistence type="inferred from homology"/>
<protein>
    <recommendedName>
        <fullName evidence="1">Ribonuclease PH</fullName>
        <shortName evidence="1">RNase PH</shortName>
        <ecNumber evidence="1">2.7.7.56</ecNumber>
    </recommendedName>
    <alternativeName>
        <fullName evidence="1">tRNA nucleotidyltransferase</fullName>
    </alternativeName>
</protein>
<comment type="function">
    <text evidence="1">Phosphorolytic 3'-5' exoribonuclease that plays an important role in tRNA 3'-end maturation. Removes nucleotide residues following the 3'-CCA terminus of tRNAs; can also add nucleotides to the ends of RNA molecules by using nucleoside diphosphates as substrates, but this may not be physiologically important. Probably plays a role in initiation of 16S rRNA degradation (leading to ribosome degradation) during starvation.</text>
</comment>
<comment type="catalytic activity">
    <reaction evidence="1">
        <text>tRNA(n+1) + phosphate = tRNA(n) + a ribonucleoside 5'-diphosphate</text>
        <dbReference type="Rhea" id="RHEA:10628"/>
        <dbReference type="Rhea" id="RHEA-COMP:17343"/>
        <dbReference type="Rhea" id="RHEA-COMP:17344"/>
        <dbReference type="ChEBI" id="CHEBI:43474"/>
        <dbReference type="ChEBI" id="CHEBI:57930"/>
        <dbReference type="ChEBI" id="CHEBI:173114"/>
        <dbReference type="EC" id="2.7.7.56"/>
    </reaction>
</comment>
<comment type="subunit">
    <text evidence="1">Homohexameric ring arranged as a trimer of dimers.</text>
</comment>
<comment type="similarity">
    <text evidence="1">Belongs to the RNase PH family.</text>
</comment>
<feature type="chain" id="PRO_1000212068" description="Ribonuclease PH">
    <location>
        <begin position="1"/>
        <end position="261"/>
    </location>
</feature>
<feature type="region of interest" description="Disordered" evidence="2">
    <location>
        <begin position="242"/>
        <end position="261"/>
    </location>
</feature>
<feature type="compositionally biased region" description="Basic and acidic residues" evidence="2">
    <location>
        <begin position="251"/>
        <end position="261"/>
    </location>
</feature>
<feature type="binding site" evidence="1">
    <location>
        <position position="88"/>
    </location>
    <ligand>
        <name>phosphate</name>
        <dbReference type="ChEBI" id="CHEBI:43474"/>
        <note>substrate</note>
    </ligand>
</feature>
<feature type="binding site" evidence="1">
    <location>
        <begin position="126"/>
        <end position="128"/>
    </location>
    <ligand>
        <name>phosphate</name>
        <dbReference type="ChEBI" id="CHEBI:43474"/>
        <note>substrate</note>
    </ligand>
</feature>
<reference key="1">
    <citation type="submission" date="2005-03" db="EMBL/GenBank/DDBJ databases">
        <title>Comparison of the complete genome sequences of Rhodococcus erythropolis PR4 and Rhodococcus opacus B4.</title>
        <authorList>
            <person name="Takarada H."/>
            <person name="Sekine M."/>
            <person name="Hosoyama A."/>
            <person name="Yamada R."/>
            <person name="Fujisawa T."/>
            <person name="Omata S."/>
            <person name="Shimizu A."/>
            <person name="Tsukatani N."/>
            <person name="Tanikawa S."/>
            <person name="Fujita N."/>
            <person name="Harayama S."/>
        </authorList>
    </citation>
    <scope>NUCLEOTIDE SEQUENCE [LARGE SCALE GENOMIC DNA]</scope>
    <source>
        <strain>PR4 / NBRC 100887</strain>
    </source>
</reference>